<feature type="chain" id="PRO_1000017654" description="Adenosine deaminase">
    <location>
        <begin position="1"/>
        <end position="335"/>
    </location>
</feature>
<feature type="active site" description="Proton donor" evidence="1">
    <location>
        <position position="200"/>
    </location>
</feature>
<feature type="binding site" evidence="1">
    <location>
        <position position="12"/>
    </location>
    <ligand>
        <name>Zn(2+)</name>
        <dbReference type="ChEBI" id="CHEBI:29105"/>
        <note>catalytic</note>
    </ligand>
</feature>
<feature type="binding site" evidence="1">
    <location>
        <position position="14"/>
    </location>
    <ligand>
        <name>substrate</name>
    </ligand>
</feature>
<feature type="binding site" evidence="1">
    <location>
        <position position="14"/>
    </location>
    <ligand>
        <name>Zn(2+)</name>
        <dbReference type="ChEBI" id="CHEBI:29105"/>
        <note>catalytic</note>
    </ligand>
</feature>
<feature type="binding site" evidence="1">
    <location>
        <position position="16"/>
    </location>
    <ligand>
        <name>substrate</name>
    </ligand>
</feature>
<feature type="binding site" evidence="1">
    <location>
        <position position="197"/>
    </location>
    <ligand>
        <name>Zn(2+)</name>
        <dbReference type="ChEBI" id="CHEBI:29105"/>
        <note>catalytic</note>
    </ligand>
</feature>
<feature type="binding site" evidence="1">
    <location>
        <position position="278"/>
    </location>
    <ligand>
        <name>Zn(2+)</name>
        <dbReference type="ChEBI" id="CHEBI:29105"/>
        <note>catalytic</note>
    </ligand>
</feature>
<feature type="site" description="Important for catalytic activity" evidence="1">
    <location>
        <position position="221"/>
    </location>
</feature>
<sequence length="335" mass="37683">MNFKKLPKIELHCHLDGSLRIDTILDIAKKDNIPLPSYNKKELINYVSIMDDCNSLDEYLNKFFIPNKVMQTKENLKRIAFELLEDVAADNVKYIEVRFAPLLHVEKGLNIEEIIESVLAGIKEAEKLYDIKGNLILGCMRNMDIPSAFEVVKKGAKFIGKGVVAIDLCAGEEPHFPGKYIEVLKLAKECGYRITIHAGEAGVGENVLEAINLLNAERIGHGIYIKNCAEAYKLVKEKNIPLEVCPTSNLHTKAFESYETHPFMDFLKDGIKVTINTDNMTVSNTTITKELEMLNKFCGLSIEDYKILYLNAVEASFASPETKEILKSYANEITA</sequence>
<name>ADD_CLOB1</name>
<dbReference type="EC" id="3.5.4.4" evidence="1"/>
<dbReference type="EMBL" id="CP000726">
    <property type="protein sequence ID" value="ABS35662.1"/>
    <property type="molecule type" value="Genomic_DNA"/>
</dbReference>
<dbReference type="RefSeq" id="WP_011948672.1">
    <property type="nucleotide sequence ID" value="NC_009697.1"/>
</dbReference>
<dbReference type="SMR" id="A7FSN7"/>
<dbReference type="GeneID" id="5185246"/>
<dbReference type="KEGG" id="cba:CLB_1030"/>
<dbReference type="HOGENOM" id="CLU_039228_0_0_9"/>
<dbReference type="GO" id="GO:0005829">
    <property type="term" value="C:cytosol"/>
    <property type="evidence" value="ECO:0007669"/>
    <property type="project" value="TreeGrafter"/>
</dbReference>
<dbReference type="GO" id="GO:0046936">
    <property type="term" value="F:2'-deoxyadenosine deaminase activity"/>
    <property type="evidence" value="ECO:0007669"/>
    <property type="project" value="RHEA"/>
</dbReference>
<dbReference type="GO" id="GO:0004000">
    <property type="term" value="F:adenosine deaminase activity"/>
    <property type="evidence" value="ECO:0007669"/>
    <property type="project" value="UniProtKB-UniRule"/>
</dbReference>
<dbReference type="GO" id="GO:0008270">
    <property type="term" value="F:zinc ion binding"/>
    <property type="evidence" value="ECO:0007669"/>
    <property type="project" value="UniProtKB-UniRule"/>
</dbReference>
<dbReference type="GO" id="GO:0006154">
    <property type="term" value="P:adenosine catabolic process"/>
    <property type="evidence" value="ECO:0007669"/>
    <property type="project" value="TreeGrafter"/>
</dbReference>
<dbReference type="GO" id="GO:0043103">
    <property type="term" value="P:hypoxanthine salvage"/>
    <property type="evidence" value="ECO:0007669"/>
    <property type="project" value="TreeGrafter"/>
</dbReference>
<dbReference type="GO" id="GO:0046103">
    <property type="term" value="P:inosine biosynthetic process"/>
    <property type="evidence" value="ECO:0007669"/>
    <property type="project" value="TreeGrafter"/>
</dbReference>
<dbReference type="GO" id="GO:0009117">
    <property type="term" value="P:nucleotide metabolic process"/>
    <property type="evidence" value="ECO:0007669"/>
    <property type="project" value="UniProtKB-KW"/>
</dbReference>
<dbReference type="GO" id="GO:0009168">
    <property type="term" value="P:purine ribonucleoside monophosphate biosynthetic process"/>
    <property type="evidence" value="ECO:0007669"/>
    <property type="project" value="UniProtKB-UniRule"/>
</dbReference>
<dbReference type="CDD" id="cd01320">
    <property type="entry name" value="ADA"/>
    <property type="match status" value="1"/>
</dbReference>
<dbReference type="FunFam" id="3.20.20.140:FF:000093">
    <property type="entry name" value="Adenosine deaminase"/>
    <property type="match status" value="1"/>
</dbReference>
<dbReference type="Gene3D" id="3.20.20.140">
    <property type="entry name" value="Metal-dependent hydrolases"/>
    <property type="match status" value="1"/>
</dbReference>
<dbReference type="HAMAP" id="MF_00540">
    <property type="entry name" value="A_deaminase"/>
    <property type="match status" value="1"/>
</dbReference>
<dbReference type="InterPro" id="IPR028893">
    <property type="entry name" value="A_deaminase"/>
</dbReference>
<dbReference type="InterPro" id="IPR001365">
    <property type="entry name" value="A_deaminase_dom"/>
</dbReference>
<dbReference type="InterPro" id="IPR006330">
    <property type="entry name" value="Ado/ade_deaminase"/>
</dbReference>
<dbReference type="InterPro" id="IPR032466">
    <property type="entry name" value="Metal_Hydrolase"/>
</dbReference>
<dbReference type="NCBIfam" id="TIGR01430">
    <property type="entry name" value="aden_deam"/>
    <property type="match status" value="1"/>
</dbReference>
<dbReference type="PANTHER" id="PTHR11409">
    <property type="entry name" value="ADENOSINE DEAMINASE"/>
    <property type="match status" value="1"/>
</dbReference>
<dbReference type="PANTHER" id="PTHR11409:SF43">
    <property type="entry name" value="ADENOSINE DEAMINASE"/>
    <property type="match status" value="1"/>
</dbReference>
<dbReference type="Pfam" id="PF00962">
    <property type="entry name" value="A_deaminase"/>
    <property type="match status" value="1"/>
</dbReference>
<dbReference type="SUPFAM" id="SSF51556">
    <property type="entry name" value="Metallo-dependent hydrolases"/>
    <property type="match status" value="1"/>
</dbReference>
<organism>
    <name type="scientific">Clostridium botulinum (strain ATCC 19397 / Type A)</name>
    <dbReference type="NCBI Taxonomy" id="441770"/>
    <lineage>
        <taxon>Bacteria</taxon>
        <taxon>Bacillati</taxon>
        <taxon>Bacillota</taxon>
        <taxon>Clostridia</taxon>
        <taxon>Eubacteriales</taxon>
        <taxon>Clostridiaceae</taxon>
        <taxon>Clostridium</taxon>
    </lineage>
</organism>
<keyword id="KW-0378">Hydrolase</keyword>
<keyword id="KW-0479">Metal-binding</keyword>
<keyword id="KW-0546">Nucleotide metabolism</keyword>
<keyword id="KW-0862">Zinc</keyword>
<accession>A7FSN7</accession>
<proteinExistence type="inferred from homology"/>
<protein>
    <recommendedName>
        <fullName evidence="1">Adenosine deaminase</fullName>
        <ecNumber evidence="1">3.5.4.4</ecNumber>
    </recommendedName>
    <alternativeName>
        <fullName evidence="1">Adenosine aminohydrolase</fullName>
    </alternativeName>
</protein>
<evidence type="ECO:0000255" key="1">
    <source>
        <dbReference type="HAMAP-Rule" id="MF_00540"/>
    </source>
</evidence>
<comment type="function">
    <text evidence="1">Catalyzes the hydrolytic deamination of adenosine and 2-deoxyadenosine.</text>
</comment>
<comment type="catalytic activity">
    <reaction evidence="1">
        <text>adenosine + H2O + H(+) = inosine + NH4(+)</text>
        <dbReference type="Rhea" id="RHEA:24408"/>
        <dbReference type="ChEBI" id="CHEBI:15377"/>
        <dbReference type="ChEBI" id="CHEBI:15378"/>
        <dbReference type="ChEBI" id="CHEBI:16335"/>
        <dbReference type="ChEBI" id="CHEBI:17596"/>
        <dbReference type="ChEBI" id="CHEBI:28938"/>
        <dbReference type="EC" id="3.5.4.4"/>
    </reaction>
    <physiologicalReaction direction="left-to-right" evidence="1">
        <dbReference type="Rhea" id="RHEA:24409"/>
    </physiologicalReaction>
</comment>
<comment type="catalytic activity">
    <reaction evidence="1">
        <text>2'-deoxyadenosine + H2O + H(+) = 2'-deoxyinosine + NH4(+)</text>
        <dbReference type="Rhea" id="RHEA:28190"/>
        <dbReference type="ChEBI" id="CHEBI:15377"/>
        <dbReference type="ChEBI" id="CHEBI:15378"/>
        <dbReference type="ChEBI" id="CHEBI:17256"/>
        <dbReference type="ChEBI" id="CHEBI:28938"/>
        <dbReference type="ChEBI" id="CHEBI:28997"/>
        <dbReference type="EC" id="3.5.4.4"/>
    </reaction>
    <physiologicalReaction direction="left-to-right" evidence="1">
        <dbReference type="Rhea" id="RHEA:28191"/>
    </physiologicalReaction>
</comment>
<comment type="cofactor">
    <cofactor evidence="1">
        <name>Zn(2+)</name>
        <dbReference type="ChEBI" id="CHEBI:29105"/>
    </cofactor>
    <text evidence="1">Binds 1 zinc ion per subunit.</text>
</comment>
<comment type="similarity">
    <text evidence="1">Belongs to the metallo-dependent hydrolases superfamily. Adenosine and AMP deaminases family. Adenosine deaminase subfamily.</text>
</comment>
<gene>
    <name evidence="1" type="primary">add</name>
    <name type="ordered locus">CLB_1030</name>
</gene>
<reference key="1">
    <citation type="journal article" date="2007" name="PLoS ONE">
        <title>Analysis of the neurotoxin complex genes in Clostridium botulinum A1-A4 and B1 strains: BoNT/A3, /Ba4 and /B1 clusters are located within plasmids.</title>
        <authorList>
            <person name="Smith T.J."/>
            <person name="Hill K.K."/>
            <person name="Foley B.T."/>
            <person name="Detter J.C."/>
            <person name="Munk A.C."/>
            <person name="Bruce D.C."/>
            <person name="Doggett N.A."/>
            <person name="Smith L.A."/>
            <person name="Marks J.D."/>
            <person name="Xie G."/>
            <person name="Brettin T.S."/>
        </authorList>
    </citation>
    <scope>NUCLEOTIDE SEQUENCE [LARGE SCALE GENOMIC DNA]</scope>
    <source>
        <strain>ATCC 19397 / Type A</strain>
    </source>
</reference>